<feature type="chain" id="PRO_0000258396" description="Phosphoribosylformylglycinamidine cyclo-ligase">
    <location>
        <begin position="1"/>
        <end position="357"/>
    </location>
</feature>
<keyword id="KW-0067">ATP-binding</keyword>
<keyword id="KW-0963">Cytoplasm</keyword>
<keyword id="KW-0436">Ligase</keyword>
<keyword id="KW-0547">Nucleotide-binding</keyword>
<keyword id="KW-0658">Purine biosynthesis</keyword>
<accession>Q215Q6</accession>
<proteinExistence type="inferred from homology"/>
<comment type="catalytic activity">
    <reaction evidence="1">
        <text>2-formamido-N(1)-(5-O-phospho-beta-D-ribosyl)acetamidine + ATP = 5-amino-1-(5-phospho-beta-D-ribosyl)imidazole + ADP + phosphate + H(+)</text>
        <dbReference type="Rhea" id="RHEA:23032"/>
        <dbReference type="ChEBI" id="CHEBI:15378"/>
        <dbReference type="ChEBI" id="CHEBI:30616"/>
        <dbReference type="ChEBI" id="CHEBI:43474"/>
        <dbReference type="ChEBI" id="CHEBI:137981"/>
        <dbReference type="ChEBI" id="CHEBI:147287"/>
        <dbReference type="ChEBI" id="CHEBI:456216"/>
        <dbReference type="EC" id="6.3.3.1"/>
    </reaction>
</comment>
<comment type="pathway">
    <text evidence="1">Purine metabolism; IMP biosynthesis via de novo pathway; 5-amino-1-(5-phospho-D-ribosyl)imidazole from N(2)-formyl-N(1)-(5-phospho-D-ribosyl)glycinamide: step 2/2.</text>
</comment>
<comment type="subcellular location">
    <subcellularLocation>
        <location evidence="1">Cytoplasm</location>
    </subcellularLocation>
</comment>
<comment type="similarity">
    <text evidence="1">Belongs to the AIR synthase family.</text>
</comment>
<name>PUR5_RHOPB</name>
<reference key="1">
    <citation type="submission" date="2006-03" db="EMBL/GenBank/DDBJ databases">
        <title>Complete sequence of Rhodopseudomonas palustris BisB18.</title>
        <authorList>
            <consortium name="US DOE Joint Genome Institute"/>
            <person name="Copeland A."/>
            <person name="Lucas S."/>
            <person name="Lapidus A."/>
            <person name="Barry K."/>
            <person name="Detter J.C."/>
            <person name="Glavina del Rio T."/>
            <person name="Hammon N."/>
            <person name="Israni S."/>
            <person name="Dalin E."/>
            <person name="Tice H."/>
            <person name="Pitluck S."/>
            <person name="Chain P."/>
            <person name="Malfatti S."/>
            <person name="Shin M."/>
            <person name="Vergez L."/>
            <person name="Schmutz J."/>
            <person name="Larimer F."/>
            <person name="Land M."/>
            <person name="Hauser L."/>
            <person name="Pelletier D.A."/>
            <person name="Kyrpides N."/>
            <person name="Anderson I."/>
            <person name="Oda Y."/>
            <person name="Harwood C.S."/>
            <person name="Richardson P."/>
        </authorList>
    </citation>
    <scope>NUCLEOTIDE SEQUENCE [LARGE SCALE GENOMIC DNA]</scope>
    <source>
        <strain>BisB18</strain>
    </source>
</reference>
<evidence type="ECO:0000255" key="1">
    <source>
        <dbReference type="HAMAP-Rule" id="MF_00741"/>
    </source>
</evidence>
<gene>
    <name evidence="1" type="primary">purM</name>
    <name type="ordered locus">RPC_2326</name>
</gene>
<organism>
    <name type="scientific">Rhodopseudomonas palustris (strain BisB18)</name>
    <dbReference type="NCBI Taxonomy" id="316056"/>
    <lineage>
        <taxon>Bacteria</taxon>
        <taxon>Pseudomonadati</taxon>
        <taxon>Pseudomonadota</taxon>
        <taxon>Alphaproteobacteria</taxon>
        <taxon>Hyphomicrobiales</taxon>
        <taxon>Nitrobacteraceae</taxon>
        <taxon>Rhodopseudomonas</taxon>
    </lineage>
</organism>
<sequence length="357" mass="36846">MTDRKNGLTYADAGVDIDAGNRLVDLIKPMVRATARPGADAEIGGFGGLFDLKAAGFKDPVLVAATDGVGTKVKIAIEAGLHAGIGIDLVAMSVNDLVVQGAEPLFFLDYFACGKLDPVATAAIVAGIAEGCRDSGCALIGGETAEMPGLYTDGDYDLAGFAVGAAERGTLLPGKDIAAGDAVIGLASSGVHSNGFSLVRKIVERSGLGYDANAPFSPVMTLGGALLAPTKLYVKSCLRAIRETGAVKGLAHITGGGFTDNIPRVLPPHLGVGIDLPRLPVLPVFKWLAEQGEIAELELLRTFNCGIGMIAIVRADAVEQVSDILTEAGETVCLLGEVIEAKGEHRVVYSGHLDLAW</sequence>
<protein>
    <recommendedName>
        <fullName evidence="1">Phosphoribosylformylglycinamidine cyclo-ligase</fullName>
        <ecNumber evidence="1">6.3.3.1</ecNumber>
    </recommendedName>
    <alternativeName>
        <fullName evidence="1">AIR synthase</fullName>
    </alternativeName>
    <alternativeName>
        <fullName evidence="1">AIRS</fullName>
    </alternativeName>
    <alternativeName>
        <fullName evidence="1">Phosphoribosyl-aminoimidazole synthetase</fullName>
    </alternativeName>
</protein>
<dbReference type="EC" id="6.3.3.1" evidence="1"/>
<dbReference type="EMBL" id="CP000301">
    <property type="protein sequence ID" value="ABD87880.1"/>
    <property type="molecule type" value="Genomic_DNA"/>
</dbReference>
<dbReference type="SMR" id="Q215Q6"/>
<dbReference type="STRING" id="316056.RPC_2326"/>
<dbReference type="KEGG" id="rpc:RPC_2326"/>
<dbReference type="eggNOG" id="COG0150">
    <property type="taxonomic scope" value="Bacteria"/>
</dbReference>
<dbReference type="HOGENOM" id="CLU_047116_0_0_5"/>
<dbReference type="OrthoDB" id="9777881at2"/>
<dbReference type="UniPathway" id="UPA00074">
    <property type="reaction ID" value="UER00129"/>
</dbReference>
<dbReference type="GO" id="GO:0005829">
    <property type="term" value="C:cytosol"/>
    <property type="evidence" value="ECO:0007669"/>
    <property type="project" value="TreeGrafter"/>
</dbReference>
<dbReference type="GO" id="GO:0005524">
    <property type="term" value="F:ATP binding"/>
    <property type="evidence" value="ECO:0007669"/>
    <property type="project" value="UniProtKB-KW"/>
</dbReference>
<dbReference type="GO" id="GO:0004637">
    <property type="term" value="F:phosphoribosylamine-glycine ligase activity"/>
    <property type="evidence" value="ECO:0007669"/>
    <property type="project" value="TreeGrafter"/>
</dbReference>
<dbReference type="GO" id="GO:0004641">
    <property type="term" value="F:phosphoribosylformylglycinamidine cyclo-ligase activity"/>
    <property type="evidence" value="ECO:0007669"/>
    <property type="project" value="UniProtKB-UniRule"/>
</dbReference>
<dbReference type="GO" id="GO:0006189">
    <property type="term" value="P:'de novo' IMP biosynthetic process"/>
    <property type="evidence" value="ECO:0007669"/>
    <property type="project" value="UniProtKB-UniRule"/>
</dbReference>
<dbReference type="GO" id="GO:0046084">
    <property type="term" value="P:adenine biosynthetic process"/>
    <property type="evidence" value="ECO:0007669"/>
    <property type="project" value="TreeGrafter"/>
</dbReference>
<dbReference type="CDD" id="cd02196">
    <property type="entry name" value="PurM"/>
    <property type="match status" value="1"/>
</dbReference>
<dbReference type="FunFam" id="3.30.1330.10:FF:000001">
    <property type="entry name" value="Phosphoribosylformylglycinamidine cyclo-ligase"/>
    <property type="match status" value="1"/>
</dbReference>
<dbReference type="FunFam" id="3.90.650.10:FF:000001">
    <property type="entry name" value="Phosphoribosylformylglycinamidine cyclo-ligase"/>
    <property type="match status" value="1"/>
</dbReference>
<dbReference type="Gene3D" id="3.90.650.10">
    <property type="entry name" value="PurM-like C-terminal domain"/>
    <property type="match status" value="1"/>
</dbReference>
<dbReference type="Gene3D" id="3.30.1330.10">
    <property type="entry name" value="PurM-like, N-terminal domain"/>
    <property type="match status" value="1"/>
</dbReference>
<dbReference type="HAMAP" id="MF_00741">
    <property type="entry name" value="AIRS"/>
    <property type="match status" value="1"/>
</dbReference>
<dbReference type="InterPro" id="IPR010918">
    <property type="entry name" value="PurM-like_C_dom"/>
</dbReference>
<dbReference type="InterPro" id="IPR036676">
    <property type="entry name" value="PurM-like_C_sf"/>
</dbReference>
<dbReference type="InterPro" id="IPR016188">
    <property type="entry name" value="PurM-like_N"/>
</dbReference>
<dbReference type="InterPro" id="IPR036921">
    <property type="entry name" value="PurM-like_N_sf"/>
</dbReference>
<dbReference type="InterPro" id="IPR004733">
    <property type="entry name" value="PurM_cligase"/>
</dbReference>
<dbReference type="NCBIfam" id="TIGR00878">
    <property type="entry name" value="purM"/>
    <property type="match status" value="1"/>
</dbReference>
<dbReference type="PANTHER" id="PTHR10520:SF12">
    <property type="entry name" value="TRIFUNCTIONAL PURINE BIOSYNTHETIC PROTEIN ADENOSINE-3"/>
    <property type="match status" value="1"/>
</dbReference>
<dbReference type="PANTHER" id="PTHR10520">
    <property type="entry name" value="TRIFUNCTIONAL PURINE BIOSYNTHETIC PROTEIN ADENOSINE-3-RELATED"/>
    <property type="match status" value="1"/>
</dbReference>
<dbReference type="Pfam" id="PF00586">
    <property type="entry name" value="AIRS"/>
    <property type="match status" value="1"/>
</dbReference>
<dbReference type="Pfam" id="PF02769">
    <property type="entry name" value="AIRS_C"/>
    <property type="match status" value="1"/>
</dbReference>
<dbReference type="SUPFAM" id="SSF56042">
    <property type="entry name" value="PurM C-terminal domain-like"/>
    <property type="match status" value="1"/>
</dbReference>
<dbReference type="SUPFAM" id="SSF55326">
    <property type="entry name" value="PurM N-terminal domain-like"/>
    <property type="match status" value="1"/>
</dbReference>